<reference key="1">
    <citation type="journal article" date="2000" name="Nature">
        <title>DNA sequence of both chromosomes of the cholera pathogen Vibrio cholerae.</title>
        <authorList>
            <person name="Heidelberg J.F."/>
            <person name="Eisen J.A."/>
            <person name="Nelson W.C."/>
            <person name="Clayton R.A."/>
            <person name="Gwinn M.L."/>
            <person name="Dodson R.J."/>
            <person name="Haft D.H."/>
            <person name="Hickey E.K."/>
            <person name="Peterson J.D."/>
            <person name="Umayam L.A."/>
            <person name="Gill S.R."/>
            <person name="Nelson K.E."/>
            <person name="Read T.D."/>
            <person name="Tettelin H."/>
            <person name="Richardson D.L."/>
            <person name="Ermolaeva M.D."/>
            <person name="Vamathevan J.J."/>
            <person name="Bass S."/>
            <person name="Qin H."/>
            <person name="Dragoi I."/>
            <person name="Sellers P."/>
            <person name="McDonald L.A."/>
            <person name="Utterback T.R."/>
            <person name="Fleischmann R.D."/>
            <person name="Nierman W.C."/>
            <person name="White O."/>
            <person name="Salzberg S.L."/>
            <person name="Smith H.O."/>
            <person name="Colwell R.R."/>
            <person name="Mekalanos J.J."/>
            <person name="Venter J.C."/>
            <person name="Fraser C.M."/>
        </authorList>
    </citation>
    <scope>NUCLEOTIDE SEQUENCE [LARGE SCALE GENOMIC DNA]</scope>
    <source>
        <strain>ATCC 39315 / El Tor Inaba N16961</strain>
    </source>
</reference>
<protein>
    <recommendedName>
        <fullName evidence="1">Protein translocase subunit SecE</fullName>
    </recommendedName>
</protein>
<comment type="function">
    <text evidence="1">Essential subunit of the Sec protein translocation channel SecYEG. Clamps together the 2 halves of SecY. May contact the channel plug during translocation.</text>
</comment>
<comment type="subunit">
    <text evidence="1">Component of the Sec protein translocase complex. Heterotrimer consisting of SecY, SecE and SecG subunits. The heterotrimers can form oligomers, although 1 heterotrimer is thought to be able to translocate proteins. Interacts with the ribosome. Interacts with SecDF, and other proteins may be involved. Interacts with SecA.</text>
</comment>
<comment type="subcellular location">
    <subcellularLocation>
        <location evidence="1">Cell inner membrane</location>
        <topology evidence="1">Multi-pass membrane protein</topology>
    </subcellularLocation>
</comment>
<comment type="similarity">
    <text evidence="1">Belongs to the SecE/SEC61-gamma family.</text>
</comment>
<comment type="sequence caution" evidence="2">
    <conflict type="erroneous initiation">
        <sequence resource="EMBL-CDS" id="AAF93495"/>
    </conflict>
    <text>Extended N-terminus.</text>
</comment>
<organism>
    <name type="scientific">Vibrio cholerae serotype O1 (strain ATCC 39315 / El Tor Inaba N16961)</name>
    <dbReference type="NCBI Taxonomy" id="243277"/>
    <lineage>
        <taxon>Bacteria</taxon>
        <taxon>Pseudomonadati</taxon>
        <taxon>Pseudomonadota</taxon>
        <taxon>Gammaproteobacteria</taxon>
        <taxon>Vibrionales</taxon>
        <taxon>Vibrionaceae</taxon>
        <taxon>Vibrio</taxon>
    </lineage>
</organism>
<sequence length="126" mass="13276">MKANNAEAPDSSNAADTLKWVATFVLLVAAVVGNYLYGELSVVARAAGVIVLIAAALGVAATTTKGKEAIVFARESRMEVRKVVWPTRQETMQTTLIVLAVSIVMALALWGIDGIMVRLVAFATGV</sequence>
<name>SECE_VIBCH</name>
<gene>
    <name evidence="1" type="primary">secE</name>
    <name type="ordered locus">VC_0322</name>
</gene>
<feature type="chain" id="PRO_0000104193" description="Protein translocase subunit SecE">
    <location>
        <begin position="1"/>
        <end position="126"/>
    </location>
</feature>
<feature type="transmembrane region" description="Helical" evidence="1">
    <location>
        <begin position="18"/>
        <end position="38"/>
    </location>
</feature>
<feature type="transmembrane region" description="Helical" evidence="1">
    <location>
        <begin position="40"/>
        <end position="60"/>
    </location>
</feature>
<feature type="transmembrane region" description="Helical" evidence="1">
    <location>
        <begin position="97"/>
        <end position="117"/>
    </location>
</feature>
<keyword id="KW-0997">Cell inner membrane</keyword>
<keyword id="KW-1003">Cell membrane</keyword>
<keyword id="KW-0472">Membrane</keyword>
<keyword id="KW-0653">Protein transport</keyword>
<keyword id="KW-1185">Reference proteome</keyword>
<keyword id="KW-0811">Translocation</keyword>
<keyword id="KW-0812">Transmembrane</keyword>
<keyword id="KW-1133">Transmembrane helix</keyword>
<keyword id="KW-0813">Transport</keyword>
<accession>Q9KV36</accession>
<proteinExistence type="inferred from homology"/>
<evidence type="ECO:0000255" key="1">
    <source>
        <dbReference type="HAMAP-Rule" id="MF_00422"/>
    </source>
</evidence>
<evidence type="ECO:0000305" key="2"/>
<dbReference type="EMBL" id="AE003852">
    <property type="protein sequence ID" value="AAF93495.1"/>
    <property type="status" value="ALT_INIT"/>
    <property type="molecule type" value="Genomic_DNA"/>
</dbReference>
<dbReference type="PIR" id="H82337">
    <property type="entry name" value="H82337"/>
</dbReference>
<dbReference type="RefSeq" id="NP_229976.1">
    <property type="nucleotide sequence ID" value="NC_002505.1"/>
</dbReference>
<dbReference type="RefSeq" id="WP_000646629.1">
    <property type="nucleotide sequence ID" value="NZ_LT906614.1"/>
</dbReference>
<dbReference type="SMR" id="Q9KV36"/>
<dbReference type="STRING" id="243277.VC_0322"/>
<dbReference type="DNASU" id="2615088"/>
<dbReference type="EnsemblBacteria" id="AAF93495">
    <property type="protein sequence ID" value="AAF93495"/>
    <property type="gene ID" value="VC_0322"/>
</dbReference>
<dbReference type="GeneID" id="69720943"/>
<dbReference type="KEGG" id="vch:VC_0322"/>
<dbReference type="PATRIC" id="fig|243277.26.peg.299"/>
<dbReference type="eggNOG" id="COG0690">
    <property type="taxonomic scope" value="Bacteria"/>
</dbReference>
<dbReference type="HOGENOM" id="CLU_113663_0_1_6"/>
<dbReference type="Proteomes" id="UP000000584">
    <property type="component" value="Chromosome 1"/>
</dbReference>
<dbReference type="GO" id="GO:0005886">
    <property type="term" value="C:plasma membrane"/>
    <property type="evidence" value="ECO:0000318"/>
    <property type="project" value="GO_Central"/>
</dbReference>
<dbReference type="GO" id="GO:0008320">
    <property type="term" value="F:protein transmembrane transporter activity"/>
    <property type="evidence" value="ECO:0000318"/>
    <property type="project" value="GO_Central"/>
</dbReference>
<dbReference type="GO" id="GO:0065002">
    <property type="term" value="P:intracellular protein transmembrane transport"/>
    <property type="evidence" value="ECO:0007669"/>
    <property type="project" value="UniProtKB-UniRule"/>
</dbReference>
<dbReference type="GO" id="GO:0009306">
    <property type="term" value="P:protein secretion"/>
    <property type="evidence" value="ECO:0007669"/>
    <property type="project" value="UniProtKB-UniRule"/>
</dbReference>
<dbReference type="GO" id="GO:0006605">
    <property type="term" value="P:protein targeting"/>
    <property type="evidence" value="ECO:0007669"/>
    <property type="project" value="UniProtKB-UniRule"/>
</dbReference>
<dbReference type="GO" id="GO:0043952">
    <property type="term" value="P:protein transport by the Sec complex"/>
    <property type="evidence" value="ECO:0000318"/>
    <property type="project" value="GO_Central"/>
</dbReference>
<dbReference type="FunFam" id="1.20.5.1030:FF:000001">
    <property type="entry name" value="Preprotein translocase subunit SecE"/>
    <property type="match status" value="1"/>
</dbReference>
<dbReference type="Gene3D" id="1.20.5.1030">
    <property type="entry name" value="Preprotein translocase secy subunit"/>
    <property type="match status" value="1"/>
</dbReference>
<dbReference type="HAMAP" id="MF_00422">
    <property type="entry name" value="SecE"/>
    <property type="match status" value="1"/>
</dbReference>
<dbReference type="InterPro" id="IPR005807">
    <property type="entry name" value="SecE_bac"/>
</dbReference>
<dbReference type="InterPro" id="IPR038379">
    <property type="entry name" value="SecE_sf"/>
</dbReference>
<dbReference type="InterPro" id="IPR001901">
    <property type="entry name" value="Translocase_SecE/Sec61-g"/>
</dbReference>
<dbReference type="NCBIfam" id="NF004372">
    <property type="entry name" value="PRK05740.1-2"/>
    <property type="match status" value="1"/>
</dbReference>
<dbReference type="NCBIfam" id="TIGR00964">
    <property type="entry name" value="secE_bact"/>
    <property type="match status" value="1"/>
</dbReference>
<dbReference type="PANTHER" id="PTHR33910">
    <property type="entry name" value="PROTEIN TRANSLOCASE SUBUNIT SECE"/>
    <property type="match status" value="1"/>
</dbReference>
<dbReference type="PANTHER" id="PTHR33910:SF1">
    <property type="entry name" value="PROTEIN TRANSLOCASE SUBUNIT SECE"/>
    <property type="match status" value="1"/>
</dbReference>
<dbReference type="Pfam" id="PF00584">
    <property type="entry name" value="SecE"/>
    <property type="match status" value="1"/>
</dbReference>
<dbReference type="PRINTS" id="PR01650">
    <property type="entry name" value="SECETRNLCASE"/>
</dbReference>
<dbReference type="PROSITE" id="PS01067">
    <property type="entry name" value="SECE_SEC61G"/>
    <property type="match status" value="1"/>
</dbReference>